<evidence type="ECO:0000255" key="1">
    <source>
        <dbReference type="HAMAP-Rule" id="MF_01545"/>
    </source>
</evidence>
<protein>
    <recommendedName>
        <fullName evidence="1">p-hydroxybenzoic acid efflux pump subunit AaeB</fullName>
        <shortName evidence="1">pHBA efflux pump protein B</shortName>
    </recommendedName>
</protein>
<reference key="1">
    <citation type="journal article" date="2009" name="J. Bacteriol.">
        <title>Genomic sequencing reveals regulatory mutations and recombinational events in the widely used MC4100 lineage of Escherichia coli K-12.</title>
        <authorList>
            <person name="Ferenci T."/>
            <person name="Zhou Z."/>
            <person name="Betteridge T."/>
            <person name="Ren Y."/>
            <person name="Liu Y."/>
            <person name="Feng L."/>
            <person name="Reeves P.R."/>
            <person name="Wang L."/>
        </authorList>
    </citation>
    <scope>NUCLEOTIDE SEQUENCE [LARGE SCALE GENOMIC DNA]</scope>
    <source>
        <strain>K12 / MC4100 / BW2952</strain>
    </source>
</reference>
<organism>
    <name type="scientific">Escherichia coli (strain K12 / MC4100 / BW2952)</name>
    <dbReference type="NCBI Taxonomy" id="595496"/>
    <lineage>
        <taxon>Bacteria</taxon>
        <taxon>Pseudomonadati</taxon>
        <taxon>Pseudomonadota</taxon>
        <taxon>Gammaproteobacteria</taxon>
        <taxon>Enterobacterales</taxon>
        <taxon>Enterobacteriaceae</taxon>
        <taxon>Escherichia</taxon>
    </lineage>
</organism>
<comment type="function">
    <text evidence="1">Forms an efflux pump with AaeA. Could function as a metabolic relief valve, allowing to eliminate certain compounds when they accumulate to high levels in the cell.</text>
</comment>
<comment type="subcellular location">
    <subcellularLocation>
        <location evidence="1">Cell inner membrane</location>
        <topology evidence="1">Multi-pass membrane protein</topology>
    </subcellularLocation>
</comment>
<comment type="induction">
    <text evidence="1">Positively coregulated with aaeA and aaeX by AaeR.</text>
</comment>
<comment type="similarity">
    <text evidence="1">Belongs to the aromatic acid exporter ArAE (TC 2.A.85) family.</text>
</comment>
<feature type="chain" id="PRO_1000215442" description="p-hydroxybenzoic acid efflux pump subunit AaeB">
    <location>
        <begin position="1"/>
        <end position="655"/>
    </location>
</feature>
<feature type="transmembrane region" description="Helical" evidence="1">
    <location>
        <begin position="13"/>
        <end position="33"/>
    </location>
</feature>
<feature type="transmembrane region" description="Helical" evidence="1">
    <location>
        <begin position="38"/>
        <end position="58"/>
    </location>
</feature>
<feature type="transmembrane region" description="Helical" evidence="1">
    <location>
        <begin position="69"/>
        <end position="89"/>
    </location>
</feature>
<feature type="transmembrane region" description="Helical" evidence="1">
    <location>
        <begin position="93"/>
        <end position="113"/>
    </location>
</feature>
<feature type="transmembrane region" description="Helical" evidence="1">
    <location>
        <begin position="121"/>
        <end position="141"/>
    </location>
</feature>
<feature type="transmembrane region" description="Helical" evidence="1">
    <location>
        <begin position="152"/>
        <end position="172"/>
    </location>
</feature>
<feature type="transmembrane region" description="Helical" evidence="1">
    <location>
        <begin position="370"/>
        <end position="390"/>
    </location>
</feature>
<feature type="transmembrane region" description="Helical" evidence="1">
    <location>
        <begin position="407"/>
        <end position="427"/>
    </location>
</feature>
<feature type="transmembrane region" description="Helical" evidence="1">
    <location>
        <begin position="431"/>
        <end position="451"/>
    </location>
</feature>
<feature type="transmembrane region" description="Helical" evidence="1">
    <location>
        <begin position="459"/>
        <end position="479"/>
    </location>
</feature>
<feature type="transmembrane region" description="Helical" evidence="1">
    <location>
        <begin position="482"/>
        <end position="502"/>
    </location>
</feature>
<gene>
    <name evidence="1" type="primary">aaeB</name>
    <name type="ordered locus">BWG_2941</name>
</gene>
<accession>C4ZSX8</accession>
<keyword id="KW-0997">Cell inner membrane</keyword>
<keyword id="KW-1003">Cell membrane</keyword>
<keyword id="KW-0472">Membrane</keyword>
<keyword id="KW-0812">Transmembrane</keyword>
<keyword id="KW-1133">Transmembrane helix</keyword>
<keyword id="KW-0813">Transport</keyword>
<sequence>MGIFSIANQHIRFAVKLATAIVLALFVGFHFQLETPRWAVLTAAIVAAGPAFAAGGEPYSGAIRYRGFLRIIGTFIGCIAGLVIIIAMIRAPLLMILVCCIWAGFCTWISSLVRIENSYAWGLAGYTALIIVITIQPEPLLTPQFAVERCSEIVIGIVCAIMADLLFSPRSIKQEVDRELESLLVAQYQLMQLCIKHGDGEVVDKAWGDLVRRTTALQGMRSNLNMESSRWARANRRLKAINTLSLTLITQSCETYLIQNTRPELITDTFREFFDTPVETAQDVHKQLKRLRRVIAWTGERETPVTIYSWVAAATRYQLLKRGVISNTKINATEEEILQGEPEVKVESAERHHAMVNFWRTTLSCILGTLFWLWTGWTSGSGAMVMIAVVTSLAMRLPNPRMVAIDFIYGTLAALPLGLLYFLVIIPNTQQSMLLLCISLAVLGFFLGIEVQKRRLGSMGALASTINIIVLDNPMTFHFSQFLDSALGQIVGCVLAFTVILLVRDKSRDRTGRVLLNQFVSAAVSAMTTNVARRKENHLPALYQQLFLLMNKFPGDLPKFRLALTMIIAHQRLRDAPIPVNEDLSAFHRQMRRTADHVISARSDDKRRRYFGQLLEELEIYQEKLRIWQAPPQVTEPVNRLAGMLHKYQHALTDS</sequence>
<dbReference type="EMBL" id="CP001396">
    <property type="protein sequence ID" value="ACR64066.1"/>
    <property type="molecule type" value="Genomic_DNA"/>
</dbReference>
<dbReference type="RefSeq" id="WP_000510965.1">
    <property type="nucleotide sequence ID" value="NC_012759.1"/>
</dbReference>
<dbReference type="SMR" id="C4ZSX8"/>
<dbReference type="KEGG" id="ebw:BWG_2941"/>
<dbReference type="HOGENOM" id="CLU_027647_0_0_6"/>
<dbReference type="GO" id="GO:0005886">
    <property type="term" value="C:plasma membrane"/>
    <property type="evidence" value="ECO:0007669"/>
    <property type="project" value="UniProtKB-SubCell"/>
</dbReference>
<dbReference type="GO" id="GO:0022857">
    <property type="term" value="F:transmembrane transporter activity"/>
    <property type="evidence" value="ECO:0007669"/>
    <property type="project" value="UniProtKB-UniRule"/>
</dbReference>
<dbReference type="GO" id="GO:0046942">
    <property type="term" value="P:carboxylic acid transport"/>
    <property type="evidence" value="ECO:0007669"/>
    <property type="project" value="InterPro"/>
</dbReference>
<dbReference type="HAMAP" id="MF_01545">
    <property type="entry name" value="AaeB"/>
    <property type="match status" value="1"/>
</dbReference>
<dbReference type="InterPro" id="IPR006726">
    <property type="entry name" value="PHBA_efflux_AaeB/fusaric-R"/>
</dbReference>
<dbReference type="InterPro" id="IPR023706">
    <property type="entry name" value="PHBA_efflux_pump_AaeB"/>
</dbReference>
<dbReference type="NCBIfam" id="NF007916">
    <property type="entry name" value="PRK10631.1"/>
    <property type="match status" value="1"/>
</dbReference>
<dbReference type="PANTHER" id="PTHR30509:SF9">
    <property type="entry name" value="MULTIDRUG RESISTANCE PROTEIN MDTO"/>
    <property type="match status" value="1"/>
</dbReference>
<dbReference type="PANTHER" id="PTHR30509">
    <property type="entry name" value="P-HYDROXYBENZOIC ACID EFFLUX PUMP SUBUNIT-RELATED"/>
    <property type="match status" value="1"/>
</dbReference>
<dbReference type="Pfam" id="PF04632">
    <property type="entry name" value="FUSC"/>
    <property type="match status" value="1"/>
</dbReference>
<name>AAEB_ECOBW</name>
<proteinExistence type="inferred from homology"/>